<sequence>MATNTMLCLLILSVVLALAFATNKKGDEEPENHSTGIFGKVGRVVTVALAMSSRLGGADATRGGGAVYGGNLKSNQLPNNNWMAPPPPMAIRSAKVYDSKHSPAEYLKKFAQDFRRKTGMHSQRHHEETTLEQEKRVAGAGPDPIHHEETTLEQEKRAVPAGPDPKHHEETTLEQEKRAVPAGPDPKHHEETTLEQEKRAVPAGPDPKHHEETTFEQEKRGAPAGPDPIHH</sequence>
<name>CL4B2_GLORO</name>
<feature type="signal peptide" evidence="2">
    <location>
        <begin position="1"/>
        <end position="21"/>
    </location>
</feature>
<feature type="chain" id="PRO_5000539263" description="CLAVATA3/ESR (CLE)-related protein 4B-2" evidence="2">
    <location>
        <begin position="22"/>
        <end position="231"/>
    </location>
</feature>
<feature type="repeat" description="A-1">
    <location>
        <begin position="127"/>
        <end position="135"/>
    </location>
</feature>
<feature type="repeat" description="CLE-1">
    <location>
        <begin position="136"/>
        <end position="147"/>
    </location>
</feature>
<feature type="repeat" description="A-2">
    <location>
        <begin position="148"/>
        <end position="156"/>
    </location>
</feature>
<feature type="repeat" description="CLE-2">
    <location>
        <begin position="157"/>
        <end position="168"/>
    </location>
</feature>
<feature type="repeat" description="A-3">
    <location>
        <begin position="169"/>
        <end position="177"/>
    </location>
</feature>
<feature type="repeat" description="CLE-3">
    <location>
        <begin position="178"/>
        <end position="189"/>
    </location>
</feature>
<feature type="repeat" description="A-4">
    <location>
        <begin position="190"/>
        <end position="198"/>
    </location>
</feature>
<feature type="repeat" description="CLE-4">
    <location>
        <begin position="199"/>
        <end position="210"/>
    </location>
</feature>
<feature type="repeat" description="A-5">
    <location>
        <begin position="211"/>
        <end position="219"/>
    </location>
</feature>
<feature type="repeat" description="CLE-5">
    <location>
        <begin position="220"/>
        <end position="231"/>
    </location>
</feature>
<feature type="region of interest" description="Required for secretion from the host cytoplasm to the host apoplasm" evidence="1">
    <location>
        <begin position="21"/>
        <end position="83"/>
    </location>
</feature>
<feature type="region of interest" description="Disordered" evidence="4">
    <location>
        <begin position="116"/>
        <end position="231"/>
    </location>
</feature>
<feature type="region of interest" description="5 X approximate repeat A">
    <location>
        <begin position="127"/>
        <end position="219"/>
    </location>
</feature>
<feature type="region of interest" description="5 X approximate repeat CLE">
    <location>
        <begin position="136"/>
        <end position="231"/>
    </location>
</feature>
<feature type="compositionally biased region" description="Basic and acidic residues" evidence="4">
    <location>
        <begin position="125"/>
        <end position="137"/>
    </location>
</feature>
<feature type="compositionally biased region" description="Basic and acidic residues" evidence="4">
    <location>
        <begin position="144"/>
        <end position="221"/>
    </location>
</feature>
<feature type="glycosylation site" description="N-linked (GlcNAc...) asparagine" evidence="3">
    <location>
        <position position="32"/>
    </location>
</feature>
<comment type="function">
    <text evidence="5">Mimics host plant CLE extracellular signal peptides that regulate cell fate. May play a role in the differentiation or division of feeding cells (syncytia) induced in plant roots during infection.</text>
</comment>
<comment type="subcellular location">
    <subcellularLocation>
        <location evidence="1">Secreted</location>
    </subcellularLocation>
    <subcellularLocation>
        <location evidence="1">Host cytoplasm</location>
    </subcellularLocation>
    <subcellularLocation>
        <location evidence="1">Host extracellular space</location>
    </subcellularLocation>
    <subcellularLocation>
        <location evidence="1">Secreted</location>
        <location evidence="1">Extracellular space</location>
        <location evidence="1">Apoplast</location>
    </subcellularLocation>
    <text evidence="1">Present in secretory granules within the dorsal esophageal gland secretory cell and in the dorsal gland ampulla (collecting reservoir) at the base of the nematode stylet. Secreted into host root cells via the nematode stylet to transform the recipient cells into enlarged multinucleate feeding cells called giant-cells or syncytia. Secreted to the host apoplasm from its cytoplasm via a plant secretory pathway (By similarity).</text>
</comment>
<comment type="tissue specificity">
    <text evidence="5">Highly expressed exclusively within the dorsal esophageal gland cell during syncytium formation in host plants.</text>
</comment>
<comment type="developmental stage">
    <text evidence="5">Strongly up-regulated during root colonization, from the onset of syncytium formation by parasitic second-stage juveniles (pJ2) through the J3?J4 molts of sedentary life stages that become adult females.</text>
</comment>
<comment type="similarity">
    <text evidence="6">Belongs to the CLV3/ESR signal peptide family.</text>
</comment>
<proteinExistence type="evidence at transcript level"/>
<organism>
    <name type="scientific">Globodera rostochiensis</name>
    <name type="common">Golden nematode worm</name>
    <name type="synonym">Heterodera rostochiensis</name>
    <dbReference type="NCBI Taxonomy" id="31243"/>
    <lineage>
        <taxon>Eukaryota</taxon>
        <taxon>Metazoa</taxon>
        <taxon>Ecdysozoa</taxon>
        <taxon>Nematoda</taxon>
        <taxon>Chromadorea</taxon>
        <taxon>Rhabditida</taxon>
        <taxon>Tylenchina</taxon>
        <taxon>Tylenchomorpha</taxon>
        <taxon>Tylenchoidea</taxon>
        <taxon>Heteroderidae</taxon>
        <taxon>Heteroderinae</taxon>
        <taxon>Globodera</taxon>
    </lineage>
</organism>
<accession>D1FNK3</accession>
<reference key="1">
    <citation type="journal article" date="2009" name="Mol. Plant Microbe Interact.">
        <title>Structural and functional diversity of CLAVATA3/ESR (CLE)-like genes from the potato cyst nematode Globodera rostochiensis.</title>
        <authorList>
            <person name="Lu S.-W."/>
            <person name="Chen S."/>
            <person name="Wang J."/>
            <person name="Yu H."/>
            <person name="Chronis D."/>
            <person name="Mitchum M.G."/>
            <person name="Wang X."/>
        </authorList>
    </citation>
    <scope>NUCLEOTIDE SEQUENCE [GENOMIC DNA / MRNA]</scope>
    <scope>FUNCTION</scope>
    <scope>TISSUE SPECIFICITY</scope>
    <scope>DEVELOPMENTAL STAGE</scope>
</reference>
<keyword id="KW-0052">Apoplast</keyword>
<keyword id="KW-0221">Differentiation</keyword>
<keyword id="KW-0325">Glycoprotein</keyword>
<keyword id="KW-1035">Host cytoplasm</keyword>
<keyword id="KW-1185">Reference proteome</keyword>
<keyword id="KW-0677">Repeat</keyword>
<keyword id="KW-0964">Secreted</keyword>
<keyword id="KW-0732">Signal</keyword>
<evidence type="ECO:0000250" key="1"/>
<evidence type="ECO:0000255" key="2"/>
<evidence type="ECO:0000255" key="3">
    <source>
        <dbReference type="PROSITE-ProRule" id="PRU00498"/>
    </source>
</evidence>
<evidence type="ECO:0000256" key="4">
    <source>
        <dbReference type="SAM" id="MobiDB-lite"/>
    </source>
</evidence>
<evidence type="ECO:0000269" key="5">
    <source>
    </source>
</evidence>
<evidence type="ECO:0000305" key="6"/>
<protein>
    <recommendedName>
        <fullName>CLAVATA3/ESR (CLE)-related protein 4B-2</fullName>
    </recommendedName>
</protein>
<gene>
    <name type="primary">CLE-4B-2</name>
</gene>
<dbReference type="EMBL" id="EU386835">
    <property type="protein sequence ID" value="ACY70454.1"/>
    <property type="molecule type" value="mRNA"/>
</dbReference>
<dbReference type="EMBL" id="EU386842">
    <property type="protein sequence ID" value="ACY70461.1"/>
    <property type="molecule type" value="Genomic_DNA"/>
</dbReference>
<dbReference type="GlyCosmos" id="D1FNK3">
    <property type="glycosylation" value="1 site, No reported glycans"/>
</dbReference>
<dbReference type="Proteomes" id="UP000887572">
    <property type="component" value="Unplaced"/>
</dbReference>
<dbReference type="GO" id="GO:0005576">
    <property type="term" value="C:extracellular region"/>
    <property type="evidence" value="ECO:0007669"/>
    <property type="project" value="UniProtKB-SubCell"/>
</dbReference>
<dbReference type="GO" id="GO:0030430">
    <property type="term" value="C:host cell cytoplasm"/>
    <property type="evidence" value="ECO:0007669"/>
    <property type="project" value="UniProtKB-SubCell"/>
</dbReference>
<dbReference type="GO" id="GO:0043655">
    <property type="term" value="C:host extracellular space"/>
    <property type="evidence" value="ECO:0007669"/>
    <property type="project" value="UniProtKB-SubCell"/>
</dbReference>
<dbReference type="GO" id="GO:0030154">
    <property type="term" value="P:cell differentiation"/>
    <property type="evidence" value="ECO:0007669"/>
    <property type="project" value="UniProtKB-KW"/>
</dbReference>
<dbReference type="InterPro" id="IPR039617">
    <property type="entry name" value="CLAVATA3-CLE"/>
</dbReference>
<dbReference type="PANTHER" id="PTHR36016">
    <property type="entry name" value="CLAVATA3/ESR (CLE)-RELATED PROTEIN 7"/>
    <property type="match status" value="1"/>
</dbReference>
<dbReference type="PANTHER" id="PTHR36016:SF10">
    <property type="entry name" value="CLAVATA3_ESR (CLE)-RELATED PROTEIN 6-LIKE"/>
    <property type="match status" value="1"/>
</dbReference>